<comment type="function">
    <text evidence="2 3 4 5 6 7">Component of the DASH complex that connects microtubules with kinetochores and couples microtubule depolymerisation to chromosome movement; it is involved in retrieving kinetochores to the spindle poles before their re-orientation on the spindle in early mitosis and allows microtubule depolymerization to pull chromosomes apart and resist detachment during anaphase (PubMed:16079914, PubMed:20624975). Kinetochores, consisting of a centromere-associated inner segment and a microtubule-contacting outer segment, play a crucial role in chromosome segregation by mediating the physical connection between centromeric DNA and microtubules (PubMed:16079914, PubMed:20624975). Kinetochores also serve as an input point for the spindle assembly checkpoint, which delays anaphase until all chromosomes have bioriented on the mitotic spindle (PubMed:16079915). The DASH complex mediates bipolar kinetochore-microtubule attachments and facilitates the formation of additional interactions between outer kinetochore components and spindle microtubules (PubMed:16079914, PubMed:16079915, PubMed:22375062). During chromosome movement along the microtubule, it is required both for the sliding of kinetochores along the lateral side of the microtubule and also for microtubule end-on pulling on the kinetochore (PubMed:17881496, PubMed:18256284). Modulates cytoplasmic microtubule dynamics by tracking the plus-end of shortening microtubules and slowing their depolymerization (PubMed:17881496, PubMed:20624975).</text>
</comment>
<comment type="subunit">
    <text evidence="1 2 6 7">Component of the DASH complex consisting of ask1, dad1, dad2, dad3, dad4, dam1, duo1, dad5, spc19 and spc34, with a stoichiometry of one copy of each subunit per complex (PubMed:16079914, PubMed:22375062). Multiple DASH complexes oligomerize to form a ring that encircles spindle microtubules and organizes the rod-like NDC80 complexes of the outer kinetochore (By similarity). DASH complex oligomerization strengthens microtubule attachments (By similarity). On cytoplasmic microtubules, DASH complexes appear to form patches instead of rings (PubMed:20624975). Integrity of the complex and interactions with central kinetochore proteins are regulated by the spindle assembly checkpoint kinase ark1 (PubMed:16079914).</text>
</comment>
<comment type="subcellular location">
    <subcellularLocation>
        <location evidence="2 3 5 6">Nucleus</location>
    </subcellularLocation>
    <subcellularLocation>
        <location evidence="2 3 6">Cytoplasm</location>
        <location evidence="2 3 6">Cytoskeleton</location>
        <location evidence="2 3 6">Spindle</location>
    </subcellularLocation>
    <subcellularLocation>
        <location evidence="2 3 5 6">Chromosome</location>
        <location evidence="2 3 5 6">Centromere</location>
        <location evidence="2 3 5 6">Kinetochore</location>
    </subcellularLocation>
    <subcellularLocation>
        <location evidence="5 6">Cytoplasm</location>
        <location evidence="5 6">Cytoskeleton</location>
    </subcellularLocation>
    <text evidence="2 5 6">Associates with the mitotic spindle and the kinetochore. Kinetochore association occurs only during mitosis (PubMed:16079914). During metaphase, localizes to the plus-ends of intranuclear microtubules (INMs) (PubMed:18256284). In the cytoskeleton, localizes to cortical microtubules (PubMed:20624975).</text>
</comment>
<comment type="PTM">
    <text evidence="7">Phosphorylated by plo1 at Ser-143 during prometaphase and metaphase to promote chromosome biorientation (PubMed:22375062). Dephosphorylated in anaphase (PubMed:22375062).</text>
</comment>
<comment type="disruption phenotype">
    <text evidence="3 4 6 7">Leads to mitotic defects in a proportion of cells, including an increased time spent in metaphase, abnormal reattachment of chromosomes that have become detached from the spindle, lagging chromosomes, unequal chromosome segregation, and ultimately cut cells (septation without chromosome segregation) (PubMed:16079915, PubMed:17881496, PubMed:20624975). Sensitive to thiabendazole, thermal stress, and osmotic stress (PubMed:16079915, PubMed:20624975). Simultaneous disruption of klp6 or klp5 is lethal and leads to the cut phenotype (septation without chromosome segregation) (PubMed:16079915, PubMed:22375062).</text>
</comment>
<comment type="similarity">
    <text evidence="8">Belongs to the DASH complex DAM1 family.</text>
</comment>
<gene>
    <name type="primary">dam1</name>
    <name type="ORF">SPAC589.08c</name>
</gene>
<proteinExistence type="evidence at protein level"/>
<feature type="chain" id="PRO_0000127661" description="DASH complex subunit dam1">
    <location>
        <begin position="1"/>
        <end position="155"/>
    </location>
</feature>
<feature type="modified residue" description="Phosphoserine; by plo1" evidence="7">
    <location>
        <position position="143"/>
    </location>
</feature>
<feature type="mutagenesis site" description="Resistance to thiabendazole." evidence="7">
    <original>S</original>
    <variation>A</variation>
    <variation>D</variation>
    <location>
        <position position="143"/>
    </location>
</feature>
<protein>
    <recommendedName>
        <fullName>DASH complex subunit dam1</fullName>
    </recommendedName>
    <alternativeName>
        <fullName>Outer kinetochore protein dam1</fullName>
    </alternativeName>
</protein>
<organism>
    <name type="scientific">Schizosaccharomyces pombe (strain 972 / ATCC 24843)</name>
    <name type="common">Fission yeast</name>
    <dbReference type="NCBI Taxonomy" id="284812"/>
    <lineage>
        <taxon>Eukaryota</taxon>
        <taxon>Fungi</taxon>
        <taxon>Dikarya</taxon>
        <taxon>Ascomycota</taxon>
        <taxon>Taphrinomycotina</taxon>
        <taxon>Schizosaccharomycetes</taxon>
        <taxon>Schizosaccharomycetales</taxon>
        <taxon>Schizosaccharomycetaceae</taxon>
        <taxon>Schizosaccharomyces</taxon>
    </lineage>
</organism>
<keyword id="KW-0131">Cell cycle</keyword>
<keyword id="KW-0132">Cell division</keyword>
<keyword id="KW-0137">Centromere</keyword>
<keyword id="KW-0158">Chromosome</keyword>
<keyword id="KW-0159">Chromosome partition</keyword>
<keyword id="KW-0963">Cytoplasm</keyword>
<keyword id="KW-0206">Cytoskeleton</keyword>
<keyword id="KW-0995">Kinetochore</keyword>
<keyword id="KW-0493">Microtubule</keyword>
<keyword id="KW-0498">Mitosis</keyword>
<keyword id="KW-0539">Nucleus</keyword>
<keyword id="KW-0597">Phosphoprotein</keyword>
<keyword id="KW-1185">Reference proteome</keyword>
<name>DAM1_SCHPO</name>
<reference key="1">
    <citation type="journal article" date="2002" name="Nature">
        <title>The genome sequence of Schizosaccharomyces pombe.</title>
        <authorList>
            <person name="Wood V."/>
            <person name="Gwilliam R."/>
            <person name="Rajandream M.A."/>
            <person name="Lyne M.H."/>
            <person name="Lyne R."/>
            <person name="Stewart A."/>
            <person name="Sgouros J.G."/>
            <person name="Peat N."/>
            <person name="Hayles J."/>
            <person name="Baker S.G."/>
            <person name="Basham D."/>
            <person name="Bowman S."/>
            <person name="Brooks K."/>
            <person name="Brown D."/>
            <person name="Brown S."/>
            <person name="Chillingworth T."/>
            <person name="Churcher C.M."/>
            <person name="Collins M."/>
            <person name="Connor R."/>
            <person name="Cronin A."/>
            <person name="Davis P."/>
            <person name="Feltwell T."/>
            <person name="Fraser A."/>
            <person name="Gentles S."/>
            <person name="Goble A."/>
            <person name="Hamlin N."/>
            <person name="Harris D.E."/>
            <person name="Hidalgo J."/>
            <person name="Hodgson G."/>
            <person name="Holroyd S."/>
            <person name="Hornsby T."/>
            <person name="Howarth S."/>
            <person name="Huckle E.J."/>
            <person name="Hunt S."/>
            <person name="Jagels K."/>
            <person name="James K.D."/>
            <person name="Jones L."/>
            <person name="Jones M."/>
            <person name="Leather S."/>
            <person name="McDonald S."/>
            <person name="McLean J."/>
            <person name="Mooney P."/>
            <person name="Moule S."/>
            <person name="Mungall K.L."/>
            <person name="Murphy L.D."/>
            <person name="Niblett D."/>
            <person name="Odell C."/>
            <person name="Oliver K."/>
            <person name="O'Neil S."/>
            <person name="Pearson D."/>
            <person name="Quail M.A."/>
            <person name="Rabbinowitsch E."/>
            <person name="Rutherford K.M."/>
            <person name="Rutter S."/>
            <person name="Saunders D."/>
            <person name="Seeger K."/>
            <person name="Sharp S."/>
            <person name="Skelton J."/>
            <person name="Simmonds M.N."/>
            <person name="Squares R."/>
            <person name="Squares S."/>
            <person name="Stevens K."/>
            <person name="Taylor K."/>
            <person name="Taylor R.G."/>
            <person name="Tivey A."/>
            <person name="Walsh S.V."/>
            <person name="Warren T."/>
            <person name="Whitehead S."/>
            <person name="Woodward J.R."/>
            <person name="Volckaert G."/>
            <person name="Aert R."/>
            <person name="Robben J."/>
            <person name="Grymonprez B."/>
            <person name="Weltjens I."/>
            <person name="Vanstreels E."/>
            <person name="Rieger M."/>
            <person name="Schaefer M."/>
            <person name="Mueller-Auer S."/>
            <person name="Gabel C."/>
            <person name="Fuchs M."/>
            <person name="Duesterhoeft A."/>
            <person name="Fritzc C."/>
            <person name="Holzer E."/>
            <person name="Moestl D."/>
            <person name="Hilbert H."/>
            <person name="Borzym K."/>
            <person name="Langer I."/>
            <person name="Beck A."/>
            <person name="Lehrach H."/>
            <person name="Reinhardt R."/>
            <person name="Pohl T.M."/>
            <person name="Eger P."/>
            <person name="Zimmermann W."/>
            <person name="Wedler H."/>
            <person name="Wambutt R."/>
            <person name="Purnelle B."/>
            <person name="Goffeau A."/>
            <person name="Cadieu E."/>
            <person name="Dreano S."/>
            <person name="Gloux S."/>
            <person name="Lelaure V."/>
            <person name="Mottier S."/>
            <person name="Galibert F."/>
            <person name="Aves S.J."/>
            <person name="Xiang Z."/>
            <person name="Hunt C."/>
            <person name="Moore K."/>
            <person name="Hurst S.M."/>
            <person name="Lucas M."/>
            <person name="Rochet M."/>
            <person name="Gaillardin C."/>
            <person name="Tallada V.A."/>
            <person name="Garzon A."/>
            <person name="Thode G."/>
            <person name="Daga R.R."/>
            <person name="Cruzado L."/>
            <person name="Jimenez J."/>
            <person name="Sanchez M."/>
            <person name="del Rey F."/>
            <person name="Benito J."/>
            <person name="Dominguez A."/>
            <person name="Revuelta J.L."/>
            <person name="Moreno S."/>
            <person name="Armstrong J."/>
            <person name="Forsburg S.L."/>
            <person name="Cerutti L."/>
            <person name="Lowe T."/>
            <person name="McCombie W.R."/>
            <person name="Paulsen I."/>
            <person name="Potashkin J."/>
            <person name="Shpakovski G.V."/>
            <person name="Ussery D."/>
            <person name="Barrell B.G."/>
            <person name="Nurse P."/>
        </authorList>
    </citation>
    <scope>NUCLEOTIDE SEQUENCE [LARGE SCALE GENOMIC DNA]</scope>
    <source>
        <strain>972 / ATCC 24843</strain>
    </source>
</reference>
<reference key="2">
    <citation type="journal article" date="2005" name="EMBO J.">
        <title>Molecular analysis of kinetochore architecture in fission yeast.</title>
        <authorList>
            <person name="Liu X."/>
            <person name="McLeod I."/>
            <person name="Anderson S."/>
            <person name="Yates J.R. III"/>
            <person name="He X."/>
        </authorList>
    </citation>
    <scope>FUNCTION</scope>
    <scope>IDENTIFICATION IN THE DASH COMPLEX</scope>
    <scope>SUBCELLULAR LOCATION</scope>
</reference>
<reference key="3">
    <citation type="journal article" date="2005" name="EMBO J.">
        <title>The DASH complex and Klp5/Klp6 kinesin coordinate bipolar chromosome attachment in fission yeast.</title>
        <authorList>
            <person name="Sanchez-Perez I."/>
            <person name="Renwick S.J."/>
            <person name="Crawley K."/>
            <person name="Karig I."/>
            <person name="Buck V."/>
            <person name="Meadows J.C."/>
            <person name="Franco-Sanchez A."/>
            <person name="Fleig U."/>
            <person name="Toda T."/>
            <person name="Millar J.B."/>
        </authorList>
    </citation>
    <scope>FUNCTION</scope>
    <scope>SUBCELLULAR LOCATION</scope>
    <scope>DISRUPTION PHENOTYPE</scope>
</reference>
<reference key="4">
    <citation type="journal article" date="2007" name="J. Cell Sci.">
        <title>The Dam1/DASH complex is required for the retrieval of unclustered kinetochores in fission yeast.</title>
        <authorList>
            <person name="Franco A."/>
            <person name="Meadows J.C."/>
            <person name="Millar J.B."/>
        </authorList>
    </citation>
    <scope>FUNCTION</scope>
    <scope>DISRUPTION PHENOTYPE</scope>
</reference>
<reference key="5">
    <citation type="journal article" date="2008" name="Mol. Biol. Cell">
        <title>Sister kinetochore recapture in fission yeast occurs by two distinct mechanisms, both requiring Dam1 and Klp2.</title>
        <authorList>
            <person name="Gachet Y."/>
            <person name="Reyes C."/>
            <person name="Courtheoux T."/>
            <person name="Goldstone S."/>
            <person name="Gay G."/>
            <person name="Serrurier C."/>
            <person name="Tournier S."/>
        </authorList>
    </citation>
    <scope>FUNCTION</scope>
    <scope>SUBCELLULAR LOCATION</scope>
</reference>
<reference key="6">
    <citation type="journal article" date="2010" name="Proc. Natl. Acad. Sci. U.S.A.">
        <title>A non-ring-like form of the Dam1 complex modulates microtubule dynamics in fission yeast.</title>
        <authorList>
            <person name="Gao Q."/>
            <person name="Courtheoux T."/>
            <person name="Gachet Y."/>
            <person name="Tournier S."/>
            <person name="He X."/>
        </authorList>
    </citation>
    <scope>FUNCTION</scope>
    <scope>SUBUNIT</scope>
    <scope>SUBCELLULAR LOCATION</scope>
    <scope>DISRUPTION PHENOTYPE</scope>
</reference>
<reference key="7">
    <citation type="journal article" date="2012" name="J. Cell Sci.">
        <title>Plo1 phosphorylates Dam1 to promote chromosome bi-orientation in fission yeast.</title>
        <authorList>
            <person name="Buttrick G.J."/>
            <person name="Lancaster T.C."/>
            <person name="Meadows J.C."/>
            <person name="Millar J.B."/>
        </authorList>
    </citation>
    <scope>FUNCTION</scope>
    <scope>INTERACTION WITH ASK1</scope>
    <scope>DISRUPTION PHENOTYPE</scope>
    <scope>PHOSPHORYLATION AT SER-143</scope>
    <scope>MUTAGENESIS OF SER-143</scope>
</reference>
<evidence type="ECO:0000250" key="1">
    <source>
        <dbReference type="UniProtKB" id="P53267"/>
    </source>
</evidence>
<evidence type="ECO:0000269" key="2">
    <source>
    </source>
</evidence>
<evidence type="ECO:0000269" key="3">
    <source>
    </source>
</evidence>
<evidence type="ECO:0000269" key="4">
    <source>
    </source>
</evidence>
<evidence type="ECO:0000269" key="5">
    <source>
    </source>
</evidence>
<evidence type="ECO:0000269" key="6">
    <source>
    </source>
</evidence>
<evidence type="ECO:0000269" key="7">
    <source>
    </source>
</evidence>
<evidence type="ECO:0000305" key="8"/>
<dbReference type="EMBL" id="CU329670">
    <property type="protein sequence ID" value="CAC19765.1"/>
    <property type="molecule type" value="Genomic_DNA"/>
</dbReference>
<dbReference type="RefSeq" id="NP_594056.1">
    <property type="nucleotide sequence ID" value="NM_001019480.2"/>
</dbReference>
<dbReference type="SMR" id="Q9HDZ6"/>
<dbReference type="BioGRID" id="278948">
    <property type="interactions" value="146"/>
</dbReference>
<dbReference type="ComplexPortal" id="CPX-10081">
    <property type="entry name" value="DASH complex"/>
</dbReference>
<dbReference type="FunCoup" id="Q9HDZ6">
    <property type="interactions" value="88"/>
</dbReference>
<dbReference type="IntAct" id="Q9HDZ6">
    <property type="interactions" value="3"/>
</dbReference>
<dbReference type="STRING" id="284812.Q9HDZ6"/>
<dbReference type="iPTMnet" id="Q9HDZ6"/>
<dbReference type="PaxDb" id="4896-SPAC589.08c.1"/>
<dbReference type="EnsemblFungi" id="SPAC589.08c.1">
    <property type="protein sequence ID" value="SPAC589.08c.1:pep"/>
    <property type="gene ID" value="SPAC589.08c"/>
</dbReference>
<dbReference type="GeneID" id="2542489"/>
<dbReference type="KEGG" id="spo:2542489"/>
<dbReference type="PomBase" id="SPAC589.08c">
    <property type="gene designation" value="dam1"/>
</dbReference>
<dbReference type="VEuPathDB" id="FungiDB:SPAC589.08c"/>
<dbReference type="eggNOG" id="ENOG502S08R">
    <property type="taxonomic scope" value="Eukaryota"/>
</dbReference>
<dbReference type="HOGENOM" id="CLU_1687699_0_0_1"/>
<dbReference type="InParanoid" id="Q9HDZ6"/>
<dbReference type="OMA" id="QINAFCV"/>
<dbReference type="PhylomeDB" id="Q9HDZ6"/>
<dbReference type="PRO" id="PR:Q9HDZ6"/>
<dbReference type="Proteomes" id="UP000002485">
    <property type="component" value="Chromosome I"/>
</dbReference>
<dbReference type="GO" id="GO:0000779">
    <property type="term" value="C:condensed chromosome, centromeric region"/>
    <property type="evidence" value="ECO:0000314"/>
    <property type="project" value="PomBase"/>
</dbReference>
<dbReference type="GO" id="GO:0055028">
    <property type="term" value="C:cortical microtubule"/>
    <property type="evidence" value="ECO:0000314"/>
    <property type="project" value="PomBase"/>
</dbReference>
<dbReference type="GO" id="GO:0042729">
    <property type="term" value="C:DASH complex"/>
    <property type="evidence" value="ECO:0000314"/>
    <property type="project" value="PomBase"/>
</dbReference>
<dbReference type="GO" id="GO:0000776">
    <property type="term" value="C:kinetochore"/>
    <property type="evidence" value="ECO:0000314"/>
    <property type="project" value="PomBase"/>
</dbReference>
<dbReference type="GO" id="GO:0072686">
    <property type="term" value="C:mitotic spindle"/>
    <property type="evidence" value="ECO:0007005"/>
    <property type="project" value="PomBase"/>
</dbReference>
<dbReference type="GO" id="GO:1990537">
    <property type="term" value="C:mitotic spindle polar microtubule"/>
    <property type="evidence" value="ECO:0000314"/>
    <property type="project" value="PomBase"/>
</dbReference>
<dbReference type="GO" id="GO:0044732">
    <property type="term" value="C:mitotic spindle pole body"/>
    <property type="evidence" value="ECO:0000314"/>
    <property type="project" value="PomBase"/>
</dbReference>
<dbReference type="GO" id="GO:0005634">
    <property type="term" value="C:nucleus"/>
    <property type="evidence" value="ECO:0007005"/>
    <property type="project" value="PomBase"/>
</dbReference>
<dbReference type="GO" id="GO:0000940">
    <property type="term" value="C:outer kinetochore"/>
    <property type="evidence" value="ECO:0000314"/>
    <property type="project" value="PomBase"/>
</dbReference>
<dbReference type="GO" id="GO:0051315">
    <property type="term" value="P:attachment of mitotic spindle microtubules to kinetochore"/>
    <property type="evidence" value="ECO:0000316"/>
    <property type="project" value="PomBase"/>
</dbReference>
<dbReference type="GO" id="GO:0008608">
    <property type="term" value="P:attachment of spindle microtubules to kinetochore"/>
    <property type="evidence" value="ECO:0000250"/>
    <property type="project" value="UniProtKB"/>
</dbReference>
<dbReference type="GO" id="GO:0051301">
    <property type="term" value="P:cell division"/>
    <property type="evidence" value="ECO:0007669"/>
    <property type="project" value="UniProtKB-KW"/>
</dbReference>
<dbReference type="GO" id="GO:0031619">
    <property type="term" value="P:homologous chromosome orientation in meiotic metaphase I"/>
    <property type="evidence" value="ECO:0000315"/>
    <property type="project" value="PomBase"/>
</dbReference>
<dbReference type="GO" id="GO:0007019">
    <property type="term" value="P:microtubule depolymerization"/>
    <property type="evidence" value="ECO:0000315"/>
    <property type="project" value="PomBase"/>
</dbReference>
<dbReference type="GO" id="GO:1990942">
    <property type="term" value="P:mitotic metaphase chromosome recapture"/>
    <property type="evidence" value="ECO:0000315"/>
    <property type="project" value="PomBase"/>
</dbReference>
<dbReference type="GO" id="GO:1990758">
    <property type="term" value="P:mitotic sister chromatid biorientation"/>
    <property type="evidence" value="ECO:0000315"/>
    <property type="project" value="PomBase"/>
</dbReference>
<dbReference type="GO" id="GO:0061804">
    <property type="term" value="P:mitotic spindle formation (spindle phase one)"/>
    <property type="evidence" value="ECO:0000315"/>
    <property type="project" value="PomBase"/>
</dbReference>
<dbReference type="GO" id="GO:1990976">
    <property type="term" value="P:protein transport along microtubule to mitotic spindle pole body"/>
    <property type="evidence" value="ECO:0000250"/>
    <property type="project" value="UniProtKB"/>
</dbReference>
<dbReference type="GO" id="GO:0140274">
    <property type="term" value="P:repair of kinetochore microtubule attachment defect"/>
    <property type="evidence" value="ECO:0000315"/>
    <property type="project" value="PomBase"/>
</dbReference>
<dbReference type="GO" id="GO:0051455">
    <property type="term" value="P:spindle attachment to meiosis I kinetochore"/>
    <property type="evidence" value="ECO:0000305"/>
    <property type="project" value="PomBase"/>
</dbReference>
<dbReference type="InterPro" id="IPR013962">
    <property type="entry name" value="DASH_Dam1"/>
</dbReference>
<dbReference type="PANTHER" id="PTHR28113">
    <property type="entry name" value="DASH COMPLEX SUBUNIT DAM1"/>
    <property type="match status" value="1"/>
</dbReference>
<dbReference type="PANTHER" id="PTHR28113:SF1">
    <property type="entry name" value="DASH COMPLEX SUBUNIT DAM1"/>
    <property type="match status" value="1"/>
</dbReference>
<dbReference type="Pfam" id="PF08653">
    <property type="entry name" value="DASH_Dam1"/>
    <property type="match status" value="1"/>
</dbReference>
<sequence>MEKYQKATQNPLENVDNVKIESENAIPSNLQAFTKSLAVLDDNVSEFRKRMNHLSATKQILDNFNESFSSFLYGLQINAFCVDYENAPLSESFLLQAKKDQFKATLMTRTGHSISDPPYDGGVISHDPNFATADETFATNDTSFIERPETYSASR</sequence>
<accession>Q9HDZ6</accession>